<proteinExistence type="inferred from homology"/>
<comment type="function">
    <text evidence="1">Cell wall formation. Adds enolpyruvyl to UDP-N-acetylglucosamine.</text>
</comment>
<comment type="catalytic activity">
    <reaction evidence="1">
        <text>phosphoenolpyruvate + UDP-N-acetyl-alpha-D-glucosamine = UDP-N-acetyl-3-O-(1-carboxyvinyl)-alpha-D-glucosamine + phosphate</text>
        <dbReference type="Rhea" id="RHEA:18681"/>
        <dbReference type="ChEBI" id="CHEBI:43474"/>
        <dbReference type="ChEBI" id="CHEBI:57705"/>
        <dbReference type="ChEBI" id="CHEBI:58702"/>
        <dbReference type="ChEBI" id="CHEBI:68483"/>
        <dbReference type="EC" id="2.5.1.7"/>
    </reaction>
</comment>
<comment type="pathway">
    <text evidence="1">Cell wall biogenesis; peptidoglycan biosynthesis.</text>
</comment>
<comment type="subcellular location">
    <subcellularLocation>
        <location evidence="1">Cytoplasm</location>
    </subcellularLocation>
</comment>
<comment type="similarity">
    <text evidence="1">Belongs to the EPSP synthase family. MurA subfamily.</text>
</comment>
<keyword id="KW-0131">Cell cycle</keyword>
<keyword id="KW-0132">Cell division</keyword>
<keyword id="KW-0133">Cell shape</keyword>
<keyword id="KW-0961">Cell wall biogenesis/degradation</keyword>
<keyword id="KW-0963">Cytoplasm</keyword>
<keyword id="KW-0573">Peptidoglycan synthesis</keyword>
<keyword id="KW-0670">Pyruvate</keyword>
<keyword id="KW-1185">Reference proteome</keyword>
<keyword id="KW-0808">Transferase</keyword>
<evidence type="ECO:0000255" key="1">
    <source>
        <dbReference type="HAMAP-Rule" id="MF_00111"/>
    </source>
</evidence>
<reference key="1">
    <citation type="journal article" date="2008" name="BMC Genomics">
        <title>Genomics of an extreme psychrophile, Psychromonas ingrahamii.</title>
        <authorList>
            <person name="Riley M."/>
            <person name="Staley J.T."/>
            <person name="Danchin A."/>
            <person name="Wang T.Z."/>
            <person name="Brettin T.S."/>
            <person name="Hauser L.J."/>
            <person name="Land M.L."/>
            <person name="Thompson L.S."/>
        </authorList>
    </citation>
    <scope>NUCLEOTIDE SEQUENCE [LARGE SCALE GENOMIC DNA]</scope>
    <source>
        <strain>DSM 17664 / CCUG 51855 / 37</strain>
    </source>
</reference>
<feature type="chain" id="PRO_1000023078" description="UDP-N-acetylglucosamine 1-carboxyvinyltransferase">
    <location>
        <begin position="1"/>
        <end position="419"/>
    </location>
</feature>
<feature type="active site" description="Proton donor" evidence="1">
    <location>
        <position position="116"/>
    </location>
</feature>
<feature type="binding site" evidence="1">
    <location>
        <begin position="22"/>
        <end position="23"/>
    </location>
    <ligand>
        <name>phosphoenolpyruvate</name>
        <dbReference type="ChEBI" id="CHEBI:58702"/>
    </ligand>
</feature>
<feature type="binding site" evidence="1">
    <location>
        <position position="92"/>
    </location>
    <ligand>
        <name>UDP-N-acetyl-alpha-D-glucosamine</name>
        <dbReference type="ChEBI" id="CHEBI:57705"/>
    </ligand>
</feature>
<feature type="binding site" evidence="1">
    <location>
        <position position="306"/>
    </location>
    <ligand>
        <name>UDP-N-acetyl-alpha-D-glucosamine</name>
        <dbReference type="ChEBI" id="CHEBI:57705"/>
    </ligand>
</feature>
<feature type="binding site" evidence="1">
    <location>
        <position position="328"/>
    </location>
    <ligand>
        <name>UDP-N-acetyl-alpha-D-glucosamine</name>
        <dbReference type="ChEBI" id="CHEBI:57705"/>
    </ligand>
</feature>
<feature type="modified residue" description="2-(S-cysteinyl)pyruvic acid O-phosphothioketal" evidence="1">
    <location>
        <position position="116"/>
    </location>
</feature>
<gene>
    <name evidence="1" type="primary">murA</name>
    <name type="ordered locus">Ping_2881</name>
</gene>
<organism>
    <name type="scientific">Psychromonas ingrahamii (strain DSM 17664 / CCUG 51855 / 37)</name>
    <dbReference type="NCBI Taxonomy" id="357804"/>
    <lineage>
        <taxon>Bacteria</taxon>
        <taxon>Pseudomonadati</taxon>
        <taxon>Pseudomonadota</taxon>
        <taxon>Gammaproteobacteria</taxon>
        <taxon>Alteromonadales</taxon>
        <taxon>Psychromonadaceae</taxon>
        <taxon>Psychromonas</taxon>
    </lineage>
</organism>
<dbReference type="EC" id="2.5.1.7" evidence="1"/>
<dbReference type="EMBL" id="CP000510">
    <property type="protein sequence ID" value="ABM04585.1"/>
    <property type="molecule type" value="Genomic_DNA"/>
</dbReference>
<dbReference type="RefSeq" id="WP_011771139.1">
    <property type="nucleotide sequence ID" value="NC_008709.1"/>
</dbReference>
<dbReference type="SMR" id="A1SYM0"/>
<dbReference type="STRING" id="357804.Ping_2881"/>
<dbReference type="KEGG" id="pin:Ping_2881"/>
<dbReference type="eggNOG" id="COG0766">
    <property type="taxonomic scope" value="Bacteria"/>
</dbReference>
<dbReference type="HOGENOM" id="CLU_027387_0_0_6"/>
<dbReference type="OrthoDB" id="9803760at2"/>
<dbReference type="UniPathway" id="UPA00219"/>
<dbReference type="Proteomes" id="UP000000639">
    <property type="component" value="Chromosome"/>
</dbReference>
<dbReference type="GO" id="GO:0005737">
    <property type="term" value="C:cytoplasm"/>
    <property type="evidence" value="ECO:0007669"/>
    <property type="project" value="UniProtKB-SubCell"/>
</dbReference>
<dbReference type="GO" id="GO:0008760">
    <property type="term" value="F:UDP-N-acetylglucosamine 1-carboxyvinyltransferase activity"/>
    <property type="evidence" value="ECO:0007669"/>
    <property type="project" value="UniProtKB-UniRule"/>
</dbReference>
<dbReference type="GO" id="GO:0051301">
    <property type="term" value="P:cell division"/>
    <property type="evidence" value="ECO:0007669"/>
    <property type="project" value="UniProtKB-KW"/>
</dbReference>
<dbReference type="GO" id="GO:0071555">
    <property type="term" value="P:cell wall organization"/>
    <property type="evidence" value="ECO:0007669"/>
    <property type="project" value="UniProtKB-KW"/>
</dbReference>
<dbReference type="GO" id="GO:0009252">
    <property type="term" value="P:peptidoglycan biosynthetic process"/>
    <property type="evidence" value="ECO:0007669"/>
    <property type="project" value="UniProtKB-UniRule"/>
</dbReference>
<dbReference type="GO" id="GO:0008360">
    <property type="term" value="P:regulation of cell shape"/>
    <property type="evidence" value="ECO:0007669"/>
    <property type="project" value="UniProtKB-KW"/>
</dbReference>
<dbReference type="GO" id="GO:0019277">
    <property type="term" value="P:UDP-N-acetylgalactosamine biosynthetic process"/>
    <property type="evidence" value="ECO:0007669"/>
    <property type="project" value="InterPro"/>
</dbReference>
<dbReference type="CDD" id="cd01555">
    <property type="entry name" value="UdpNAET"/>
    <property type="match status" value="1"/>
</dbReference>
<dbReference type="FunFam" id="3.65.10.10:FF:000001">
    <property type="entry name" value="UDP-N-acetylglucosamine 1-carboxyvinyltransferase"/>
    <property type="match status" value="1"/>
</dbReference>
<dbReference type="Gene3D" id="3.65.10.10">
    <property type="entry name" value="Enolpyruvate transferase domain"/>
    <property type="match status" value="2"/>
</dbReference>
<dbReference type="HAMAP" id="MF_00111">
    <property type="entry name" value="MurA"/>
    <property type="match status" value="1"/>
</dbReference>
<dbReference type="InterPro" id="IPR001986">
    <property type="entry name" value="Enolpyruvate_Tfrase_dom"/>
</dbReference>
<dbReference type="InterPro" id="IPR036968">
    <property type="entry name" value="Enolpyruvate_Tfrase_sf"/>
</dbReference>
<dbReference type="InterPro" id="IPR050068">
    <property type="entry name" value="MurA_subfamily"/>
</dbReference>
<dbReference type="InterPro" id="IPR013792">
    <property type="entry name" value="RNA3'P_cycl/enolpyr_Trfase_a/b"/>
</dbReference>
<dbReference type="InterPro" id="IPR005750">
    <property type="entry name" value="UDP_GlcNAc_COvinyl_MurA"/>
</dbReference>
<dbReference type="NCBIfam" id="TIGR01072">
    <property type="entry name" value="murA"/>
    <property type="match status" value="1"/>
</dbReference>
<dbReference type="NCBIfam" id="NF006873">
    <property type="entry name" value="PRK09369.1"/>
    <property type="match status" value="1"/>
</dbReference>
<dbReference type="PANTHER" id="PTHR43783">
    <property type="entry name" value="UDP-N-ACETYLGLUCOSAMINE 1-CARBOXYVINYLTRANSFERASE"/>
    <property type="match status" value="1"/>
</dbReference>
<dbReference type="PANTHER" id="PTHR43783:SF1">
    <property type="entry name" value="UDP-N-ACETYLGLUCOSAMINE 1-CARBOXYVINYLTRANSFERASE"/>
    <property type="match status" value="1"/>
</dbReference>
<dbReference type="Pfam" id="PF00275">
    <property type="entry name" value="EPSP_synthase"/>
    <property type="match status" value="1"/>
</dbReference>
<dbReference type="SUPFAM" id="SSF55205">
    <property type="entry name" value="EPT/RTPC-like"/>
    <property type="match status" value="1"/>
</dbReference>
<protein>
    <recommendedName>
        <fullName evidence="1">UDP-N-acetylglucosamine 1-carboxyvinyltransferase</fullName>
        <ecNumber evidence="1">2.5.1.7</ecNumber>
    </recommendedName>
    <alternativeName>
        <fullName evidence="1">Enoylpyruvate transferase</fullName>
    </alternativeName>
    <alternativeName>
        <fullName evidence="1">UDP-N-acetylglucosamine enolpyruvyl transferase</fullName>
        <shortName evidence="1">EPT</shortName>
    </alternativeName>
</protein>
<accession>A1SYM0</accession>
<sequence length="419" mass="44192">MGQFLIQGGCQLKGEVTISGAKNAALPILFASLLSKGNVNLTNVPLLKDISTTLELLKELGAEASQDGHEVHINASSVKNYTASYELVRSMRASILALGPLVARFGEADISLPGGCAIGARPVNLHIHGLEQMGAIIKVQNGFIKARVNGRLKGAHLYMDMVSVTGTGNLMMAAALAEGVTTIENAAKEPELVDLANFINGMGGKISGAGTDTLTIEGVESLGDCSYQVQPDRIETGTFLVAGVVSGGKVKCLKTAPHLLTAVLSKLEEAGAAVTTGSDWIEVDMIDRQLKSVNISTAPHPAFPTDMQAQFTVLNTVAPGTGRIKENIFENRFMHVPELQRMGANIILEGNLAICGDPDPLCGAEVMATDLRASASLVIAGLIAEGETIVDEIYHIDRGYEAIENKLIALGAKIKRIEN</sequence>
<name>MURA_PSYIN</name>